<evidence type="ECO:0000255" key="1"/>
<evidence type="ECO:0000269" key="2">
    <source>
    </source>
</evidence>
<evidence type="ECO:0000269" key="3">
    <source>
    </source>
</evidence>
<evidence type="ECO:0000269" key="4">
    <source>
    </source>
</evidence>
<evidence type="ECO:0000269" key="5">
    <source>
    </source>
</evidence>
<evidence type="ECO:0000269" key="6">
    <source>
    </source>
</evidence>
<evidence type="ECO:0000305" key="7"/>
<evidence type="ECO:0007829" key="8">
    <source>
        <dbReference type="PDB" id="7F16"/>
    </source>
</evidence>
<feature type="signal peptide" evidence="1">
    <location>
        <begin position="1"/>
        <end position="30"/>
    </location>
</feature>
<feature type="propeptide" id="PRO_0000045942">
    <location>
        <begin position="31"/>
        <end position="59"/>
    </location>
</feature>
<feature type="peptide" id="PRO_0000045943" description="Tuberoinfundibular peptide of 39 residues">
    <location>
        <begin position="62"/>
        <end position="100"/>
    </location>
</feature>
<feature type="helix" evidence="8">
    <location>
        <begin position="66"/>
        <end position="94"/>
    </location>
</feature>
<keyword id="KW-0002">3D-structure</keyword>
<keyword id="KW-0165">Cleavage on pair of basic residues</keyword>
<keyword id="KW-0527">Neuropeptide</keyword>
<keyword id="KW-1185">Reference proteome</keyword>
<keyword id="KW-0964">Secreted</keyword>
<keyword id="KW-0732">Signal</keyword>
<sequence>METRQVSRSPRVRLLLLLLLLLVVPWGVRTASGVALPPVGVLSLRPPGRAWADPATPRPRRSLALADDAAFRERARLLAALERRHWLNSYMHKLLVLDAP</sequence>
<dbReference type="EMBL" id="AY037555">
    <property type="protein sequence ID" value="AAK68689.1"/>
    <property type="molecule type" value="mRNA"/>
</dbReference>
<dbReference type="EMBL" id="BC093995">
    <property type="protein sequence ID" value="AAH93995.1"/>
    <property type="molecule type" value="mRNA"/>
</dbReference>
<dbReference type="EMBL" id="BC093997">
    <property type="protein sequence ID" value="AAH93997.1"/>
    <property type="molecule type" value="mRNA"/>
</dbReference>
<dbReference type="EMBL" id="AY048588">
    <property type="protein sequence ID" value="AAL06597.1"/>
    <property type="molecule type" value="mRNA"/>
</dbReference>
<dbReference type="CCDS" id="CCDS12763.1"/>
<dbReference type="RefSeq" id="NP_848544.1">
    <property type="nucleotide sequence ID" value="NM_178449.4"/>
</dbReference>
<dbReference type="PDB" id="7F16">
    <property type="method" value="EM"/>
    <property type="resolution" value="2.80 A"/>
    <property type="chains" value="P=62-100"/>
</dbReference>
<dbReference type="PDBsum" id="7F16"/>
<dbReference type="EMDB" id="EMD-31405"/>
<dbReference type="SMR" id="Q96A98"/>
<dbReference type="BioGRID" id="125223">
    <property type="interactions" value="8"/>
</dbReference>
<dbReference type="CORUM" id="Q96A98"/>
<dbReference type="FunCoup" id="Q96A98">
    <property type="interactions" value="448"/>
</dbReference>
<dbReference type="IntAct" id="Q96A98">
    <property type="interactions" value="1"/>
</dbReference>
<dbReference type="STRING" id="9606.ENSP00000270631"/>
<dbReference type="iPTMnet" id="Q96A98"/>
<dbReference type="PhosphoSitePlus" id="Q96A98"/>
<dbReference type="BioMuta" id="PTH2"/>
<dbReference type="PaxDb" id="9606-ENSP00000270631"/>
<dbReference type="PeptideAtlas" id="Q96A98"/>
<dbReference type="ProteomicsDB" id="75938"/>
<dbReference type="Antibodypedia" id="31997">
    <property type="antibodies" value="37 antibodies from 12 providers"/>
</dbReference>
<dbReference type="DNASU" id="113091"/>
<dbReference type="Ensembl" id="ENST00000270631.2">
    <property type="protein sequence ID" value="ENSP00000270631.1"/>
    <property type="gene ID" value="ENSG00000142538.2"/>
</dbReference>
<dbReference type="GeneID" id="113091"/>
<dbReference type="KEGG" id="hsa:113091"/>
<dbReference type="MANE-Select" id="ENST00000270631.2">
    <property type="protein sequence ID" value="ENSP00000270631.1"/>
    <property type="RefSeq nucleotide sequence ID" value="NM_178449.4"/>
    <property type="RefSeq protein sequence ID" value="NP_848544.1"/>
</dbReference>
<dbReference type="UCSC" id="uc002pnn.1">
    <property type="organism name" value="human"/>
</dbReference>
<dbReference type="AGR" id="HGNC:30828"/>
<dbReference type="CTD" id="113091"/>
<dbReference type="DisGeNET" id="113091"/>
<dbReference type="GeneCards" id="PTH2"/>
<dbReference type="HGNC" id="HGNC:30828">
    <property type="gene designation" value="PTH2"/>
</dbReference>
<dbReference type="HPA" id="ENSG00000142538">
    <property type="expression patterns" value="Tissue enhanced (brain)"/>
</dbReference>
<dbReference type="MIM" id="608386">
    <property type="type" value="gene"/>
</dbReference>
<dbReference type="neXtProt" id="NX_Q96A98"/>
<dbReference type="OpenTargets" id="ENSG00000142538"/>
<dbReference type="PharmGKB" id="PA162400324"/>
<dbReference type="VEuPathDB" id="HostDB:ENSG00000142538"/>
<dbReference type="eggNOG" id="ENOG502S3PJ">
    <property type="taxonomic scope" value="Eukaryota"/>
</dbReference>
<dbReference type="GeneTree" id="ENSGT00410000026259"/>
<dbReference type="HOGENOM" id="CLU_2319483_0_0_1"/>
<dbReference type="InParanoid" id="Q96A98"/>
<dbReference type="OMA" id="LVSWGHR"/>
<dbReference type="OrthoDB" id="9538741at2759"/>
<dbReference type="PAN-GO" id="Q96A98">
    <property type="GO annotations" value="0 GO annotations based on evolutionary models"/>
</dbReference>
<dbReference type="PhylomeDB" id="Q96A98"/>
<dbReference type="TreeFam" id="TF353520"/>
<dbReference type="PathwayCommons" id="Q96A98"/>
<dbReference type="Reactome" id="R-HSA-373080">
    <property type="pathway name" value="Class B/2 (Secretin family receptors)"/>
</dbReference>
<dbReference type="Reactome" id="R-HSA-418555">
    <property type="pathway name" value="G alpha (s) signalling events"/>
</dbReference>
<dbReference type="SignaLink" id="Q96A98"/>
<dbReference type="SIGNOR" id="Q96A98"/>
<dbReference type="BioGRID-ORCS" id="113091">
    <property type="hits" value="16 hits in 1133 CRISPR screens"/>
</dbReference>
<dbReference type="GeneWiki" id="TIP39"/>
<dbReference type="GenomeRNAi" id="113091"/>
<dbReference type="Pharos" id="Q96A98">
    <property type="development level" value="Tdark"/>
</dbReference>
<dbReference type="PRO" id="PR:Q96A98"/>
<dbReference type="Proteomes" id="UP000005640">
    <property type="component" value="Chromosome 19"/>
</dbReference>
<dbReference type="RNAct" id="Q96A98">
    <property type="molecule type" value="protein"/>
</dbReference>
<dbReference type="Bgee" id="ENSG00000142538">
    <property type="expression patterns" value="Expressed in secondary oocyte and 48 other cell types or tissues"/>
</dbReference>
<dbReference type="GO" id="GO:0005576">
    <property type="term" value="C:extracellular region"/>
    <property type="evidence" value="ECO:0000304"/>
    <property type="project" value="Reactome"/>
</dbReference>
<dbReference type="GO" id="GO:0007218">
    <property type="term" value="P:neuropeptide signaling pathway"/>
    <property type="evidence" value="ECO:0007669"/>
    <property type="project" value="UniProtKB-KW"/>
</dbReference>
<dbReference type="InterPro" id="IPR029396">
    <property type="entry name" value="TIP39"/>
</dbReference>
<dbReference type="PANTHER" id="PTHR28585">
    <property type="entry name" value="TUBEROINFUNDIBULAR PEPTIDE OF 39 RESIDUES"/>
    <property type="match status" value="1"/>
</dbReference>
<dbReference type="PANTHER" id="PTHR28585:SF1">
    <property type="entry name" value="TUBEROINFUNDIBULAR PEPTIDE OF 39 RESIDUES"/>
    <property type="match status" value="1"/>
</dbReference>
<dbReference type="Pfam" id="PF14980">
    <property type="entry name" value="TIP39"/>
    <property type="match status" value="1"/>
</dbReference>
<accession>Q96A98</accession>
<accession>Q96DJ4</accession>
<gene>
    <name type="primary">PTH2</name>
    <name type="synonym">TIP39</name>
    <name type="synonym">TIPF39</name>
</gene>
<reference key="1">
    <citation type="journal article" date="2002" name="J. Endocrinol.">
        <title>Characterization of the human and mouse genes encoding the tuberoinfundibular peptide of 39 residues, a ligand of the parathyroid hormone receptor family.</title>
        <authorList>
            <person name="Hansen I.A."/>
            <person name="Jakob O."/>
            <person name="Wortmann S."/>
            <person name="Arzberger T."/>
            <person name="Allolio B."/>
            <person name="Blind E."/>
        </authorList>
    </citation>
    <scope>NUCLEOTIDE SEQUENCE [MRNA]</scope>
    <scope>TISSUE SPECIFICITY</scope>
    <scope>INTERACTION WITH PTH2R</scope>
    <source>
        <tissue>Brain</tissue>
    </source>
</reference>
<reference key="2">
    <citation type="journal article" date="2002" name="Proc. Natl. Acad. Sci. U.S.A.">
        <title>Anatomical and physiological evidence for involvement of tuberoinfundibular peptide of 39 residues in nociception.</title>
        <authorList>
            <person name="Dobolyi A."/>
            <person name="Ueda H."/>
            <person name="Uchida H."/>
            <person name="Palkovits M."/>
            <person name="Usdin T.B."/>
        </authorList>
    </citation>
    <scope>NUCLEOTIDE SEQUENCE [MRNA]</scope>
</reference>
<reference key="3">
    <citation type="journal article" date="2003" name="Neuropharmacology">
        <title>Tuberoinfundibular peptide of 39 residues (TIP39): molecular structure and activity for parathyroid hormone 2 receptor.</title>
        <authorList>
            <person name="Della Penna K."/>
            <person name="Kinose F."/>
            <person name="Sun H."/>
            <person name="Koblan K.S."/>
            <person name="Wang H."/>
        </authorList>
    </citation>
    <scope>NUCLEOTIDE SEQUENCE [MRNA]</scope>
    <scope>FUNCTION</scope>
</reference>
<reference key="4">
    <citation type="journal article" date="2004" name="Genome Res.">
        <title>The status, quality, and expansion of the NIH full-length cDNA project: the Mammalian Gene Collection (MGC).</title>
        <authorList>
            <consortium name="The MGC Project Team"/>
        </authorList>
    </citation>
    <scope>NUCLEOTIDE SEQUENCE [LARGE SCALE MRNA]</scope>
    <source>
        <tissue>Brain</tissue>
    </source>
</reference>
<reference key="5">
    <citation type="journal article" date="2002" name="Endocrinology">
        <title>Identification and characterization of the murine and human gene encoding the tuberoinfundibular peptide of 39 residues.</title>
        <authorList>
            <person name="John M.R."/>
            <person name="Arai M."/>
            <person name="Rubin D.A."/>
            <person name="Jonsson K.B."/>
            <person name="Jueppner H."/>
        </authorList>
    </citation>
    <scope>NUCLEOTIDE SEQUENCE [MRNA] OF 1-85</scope>
    <scope>FUNCTION</scope>
    <scope>INTERACTION WITH PTH2R</scope>
    <source>
        <tissue>Brain</tissue>
    </source>
</reference>
<reference key="6">
    <citation type="journal article" date="2003" name="Eur. J. Pharmacol.">
        <title>PTH2 receptor-mediated inhibitory effect of parathyroid hormone and TIP39 on cell proliferation.</title>
        <authorList>
            <person name="Misiano P."/>
            <person name="Scott B.B."/>
            <person name="Scheideler M.A."/>
            <person name="Garnier M."/>
        </authorList>
    </citation>
    <scope>FUNCTION</scope>
</reference>
<reference key="7">
    <citation type="journal article" date="2004" name="Mol. Endocrinol.">
        <title>Agonist-specific regulation of parathyroid hormone (PTH) receptor type 2 activity: structural and functional analysis of PTH- and tuberoinfundibular peptide (TIP) 39-stimulated desensitization and internalization.</title>
        <authorList>
            <person name="Bisello A."/>
            <person name="Manen D."/>
            <person name="Pierroz D.D."/>
            <person name="Usdin T.B."/>
            <person name="Rizzoli R."/>
            <person name="Ferrari S.L."/>
        </authorList>
    </citation>
    <scope>FUNCTION</scope>
</reference>
<comment type="function">
    <text evidence="2 4 5 6">Plays a role as a potent and selective agonist of PTH2R resulting in adenyl cyclase activation and intracellular calcium levels elevation. Induces protein kinase C beta activation, recruitment of beta-arrestin and PTH2R internalization. May inhibit cell proliferation via its action on PTH2R activation. Neuropeptide which may also have a role in spermatogenesis. May activate nociceptors and nociceptive circuits.</text>
</comment>
<comment type="subunit">
    <text>Ligand of high affinity for the PTH2 receptor (PTH2R).</text>
</comment>
<comment type="interaction">
    <interactant intactId="EBI-21852907">
        <id>Q96A98</id>
    </interactant>
    <interactant intactId="EBI-6872827">
        <id>P17707</id>
        <label>AMD1</label>
    </interactant>
    <organismsDiffer>false</organismsDiffer>
    <experiments>2</experiments>
</comment>
<comment type="subcellular location">
    <subcellularLocation>
        <location>Secreted</location>
    </subcellularLocation>
</comment>
<comment type="tissue specificity">
    <text evidence="3">Highly expressed in fetal and adult brain, cerebellum and trachea. Weakly expressed in spinal cord, fetal liver, kidney and heart.</text>
</comment>
<comment type="similarity">
    <text evidence="7">Belongs to the parathyroid hormone family.</text>
</comment>
<proteinExistence type="evidence at protein level"/>
<organism>
    <name type="scientific">Homo sapiens</name>
    <name type="common">Human</name>
    <dbReference type="NCBI Taxonomy" id="9606"/>
    <lineage>
        <taxon>Eukaryota</taxon>
        <taxon>Metazoa</taxon>
        <taxon>Chordata</taxon>
        <taxon>Craniata</taxon>
        <taxon>Vertebrata</taxon>
        <taxon>Euteleostomi</taxon>
        <taxon>Mammalia</taxon>
        <taxon>Eutheria</taxon>
        <taxon>Euarchontoglires</taxon>
        <taxon>Primates</taxon>
        <taxon>Haplorrhini</taxon>
        <taxon>Catarrhini</taxon>
        <taxon>Hominidae</taxon>
        <taxon>Homo</taxon>
    </lineage>
</organism>
<protein>
    <recommendedName>
        <fullName>Tuberoinfundibular peptide of 39 residues</fullName>
        <shortName>TIP39</shortName>
    </recommendedName>
    <alternativeName>
        <fullName>Parathyroid hormone 2</fullName>
    </alternativeName>
</protein>
<name>TIP39_HUMAN</name>